<dbReference type="EMBL" id="AL844507">
    <property type="protein sequence ID" value="CAD51247.1"/>
    <property type="molecule type" value="Genomic_DNA"/>
</dbReference>
<dbReference type="RefSeq" id="XP_001349398.1">
    <property type="nucleotide sequence ID" value="XM_001349362.1"/>
</dbReference>
<dbReference type="SMR" id="Q8IAW3"/>
<dbReference type="FunCoup" id="Q8IAW3">
    <property type="interactions" value="86"/>
</dbReference>
<dbReference type="STRING" id="36329.Q8IAW3"/>
<dbReference type="PaxDb" id="5833-PF08_0084"/>
<dbReference type="EnsemblProtists" id="CAD51247">
    <property type="protein sequence ID" value="CAD51247"/>
    <property type="gene ID" value="PF3D7_0812700"/>
</dbReference>
<dbReference type="KEGG" id="pfa:PF3D7_0812700"/>
<dbReference type="VEuPathDB" id="PlasmoDB:PF3D7_0812700"/>
<dbReference type="HOGENOM" id="CLU_106083_0_0_1"/>
<dbReference type="InParanoid" id="Q8IAW3"/>
<dbReference type="OMA" id="PNNKYSR"/>
<dbReference type="OrthoDB" id="76567at2759"/>
<dbReference type="PhylomeDB" id="Q8IAW3"/>
<dbReference type="Proteomes" id="UP000001450">
    <property type="component" value="Chromosome 8"/>
</dbReference>
<dbReference type="GO" id="GO:0000243">
    <property type="term" value="C:commitment complex"/>
    <property type="evidence" value="ECO:0007669"/>
    <property type="project" value="UniProtKB-UniRule"/>
</dbReference>
<dbReference type="GO" id="GO:0005685">
    <property type="term" value="C:U1 snRNP"/>
    <property type="evidence" value="ECO:0000318"/>
    <property type="project" value="GO_Central"/>
</dbReference>
<dbReference type="GO" id="GO:0071004">
    <property type="term" value="C:U2-type prespliceosome"/>
    <property type="evidence" value="ECO:0007669"/>
    <property type="project" value="UniProtKB-UniRule"/>
</dbReference>
<dbReference type="GO" id="GO:0003729">
    <property type="term" value="F:mRNA binding"/>
    <property type="evidence" value="ECO:0007669"/>
    <property type="project" value="UniProtKB-UniRule"/>
</dbReference>
<dbReference type="GO" id="GO:0030627">
    <property type="term" value="F:pre-mRNA 5'-splice site binding"/>
    <property type="evidence" value="ECO:0000318"/>
    <property type="project" value="GO_Central"/>
</dbReference>
<dbReference type="GO" id="GO:0030619">
    <property type="term" value="F:U1 snRNA binding"/>
    <property type="evidence" value="ECO:0007669"/>
    <property type="project" value="UniProtKB-UniRule"/>
</dbReference>
<dbReference type="GO" id="GO:0008270">
    <property type="term" value="F:zinc ion binding"/>
    <property type="evidence" value="ECO:0007669"/>
    <property type="project" value="UniProtKB-UniRule"/>
</dbReference>
<dbReference type="GO" id="GO:0000395">
    <property type="term" value="P:mRNA 5'-splice site recognition"/>
    <property type="evidence" value="ECO:0000318"/>
    <property type="project" value="GO_Central"/>
</dbReference>
<dbReference type="GO" id="GO:0000387">
    <property type="term" value="P:spliceosomal snRNP assembly"/>
    <property type="evidence" value="ECO:0007669"/>
    <property type="project" value="UniProtKB-UniRule"/>
</dbReference>
<dbReference type="FunFam" id="3.30.160.60:FF:000890">
    <property type="entry name" value="U1 small nuclear ribonucleoprotein C"/>
    <property type="match status" value="1"/>
</dbReference>
<dbReference type="Gene3D" id="3.30.160.60">
    <property type="entry name" value="Classic Zinc Finger"/>
    <property type="match status" value="1"/>
</dbReference>
<dbReference type="HAMAP" id="MF_03153">
    <property type="entry name" value="U1_C"/>
    <property type="match status" value="1"/>
</dbReference>
<dbReference type="InterPro" id="IPR000690">
    <property type="entry name" value="Matrin/U1-C_Znf_C2H2"/>
</dbReference>
<dbReference type="InterPro" id="IPR003604">
    <property type="entry name" value="Matrin/U1-like-C_Znf_C2H2"/>
</dbReference>
<dbReference type="InterPro" id="IPR013085">
    <property type="entry name" value="U1-CZ_Znf_C2H2"/>
</dbReference>
<dbReference type="InterPro" id="IPR017340">
    <property type="entry name" value="U1_snRNP-C"/>
</dbReference>
<dbReference type="InterPro" id="IPR036236">
    <property type="entry name" value="Znf_C2H2_sf"/>
</dbReference>
<dbReference type="PANTHER" id="PTHR31148">
    <property type="entry name" value="U1 SMALL NUCLEAR RIBONUCLEOPROTEIN C"/>
    <property type="match status" value="1"/>
</dbReference>
<dbReference type="PANTHER" id="PTHR31148:SF1">
    <property type="entry name" value="U1 SMALL NUCLEAR RIBONUCLEOPROTEIN C"/>
    <property type="match status" value="1"/>
</dbReference>
<dbReference type="Pfam" id="PF06220">
    <property type="entry name" value="zf-U1"/>
    <property type="match status" value="1"/>
</dbReference>
<dbReference type="SMART" id="SM00451">
    <property type="entry name" value="ZnF_U1"/>
    <property type="match status" value="1"/>
</dbReference>
<dbReference type="SUPFAM" id="SSF57667">
    <property type="entry name" value="beta-beta-alpha zinc fingers"/>
    <property type="match status" value="1"/>
</dbReference>
<dbReference type="PROSITE" id="PS50171">
    <property type="entry name" value="ZF_MATRIN"/>
    <property type="match status" value="1"/>
</dbReference>
<evidence type="ECO:0000255" key="1">
    <source>
        <dbReference type="HAMAP-Rule" id="MF_03153"/>
    </source>
</evidence>
<evidence type="ECO:0000256" key="2">
    <source>
        <dbReference type="SAM" id="MobiDB-lite"/>
    </source>
</evidence>
<name>RU1C_PLAF7</name>
<keyword id="KW-0479">Metal-binding</keyword>
<keyword id="KW-0539">Nucleus</keyword>
<keyword id="KW-1185">Reference proteome</keyword>
<keyword id="KW-0687">Ribonucleoprotein</keyword>
<keyword id="KW-0694">RNA-binding</keyword>
<keyword id="KW-0862">Zinc</keyword>
<keyword id="KW-0863">Zinc-finger</keyword>
<gene>
    <name type="ORF">PF08_0084</name>
</gene>
<organism>
    <name type="scientific">Plasmodium falciparum (isolate 3D7)</name>
    <dbReference type="NCBI Taxonomy" id="36329"/>
    <lineage>
        <taxon>Eukaryota</taxon>
        <taxon>Sar</taxon>
        <taxon>Alveolata</taxon>
        <taxon>Apicomplexa</taxon>
        <taxon>Aconoidasida</taxon>
        <taxon>Haemosporida</taxon>
        <taxon>Plasmodiidae</taxon>
        <taxon>Plasmodium</taxon>
        <taxon>Plasmodium (Laverania)</taxon>
    </lineage>
</organism>
<protein>
    <recommendedName>
        <fullName evidence="1">U1 small nuclear ribonucleoprotein C</fullName>
        <shortName evidence="1">U1 snRNP C</shortName>
        <shortName evidence="1">U1-C</shortName>
        <shortName evidence="1">U1C</shortName>
    </recommendedName>
</protein>
<comment type="function">
    <text evidence="1">Component of the spliceosomal U1 snRNP, which is essential for recognition of the pre-mRNA 5' splice-site and the subsequent assembly of the spliceosome. U1-C is directly involved in initial 5' splice-site recognition for both constitutive and regulated alternative splicing. The interaction with the 5' splice-site seems to precede base-pairing between the pre-mRNA and the U1 snRNA. Stimulates commitment or early (E) complex formation by stabilizing the base pairing of the 5' end of the U1 snRNA and the 5' splice-site region.</text>
</comment>
<comment type="subunit">
    <text evidence="1">U1 snRNP is composed of the 7 core Sm proteins B/B', D1, D2, D3, E, F and G that assemble in a heptameric protein ring on the Sm site of the small nuclear RNA to form the core snRNP, and at least 3 U1 snRNP-specific proteins U1-70K, U1-A and U1-C. U1-C interacts with U1 snRNA and the 5' splice-site region of the pre-mRNA.</text>
</comment>
<comment type="subcellular location">
    <subcellularLocation>
        <location evidence="1">Nucleus</location>
    </subcellularLocation>
</comment>
<comment type="similarity">
    <text evidence="1">Belongs to the U1 small nuclear ribonucleoprotein C family.</text>
</comment>
<reference key="1">
    <citation type="journal article" date="2002" name="Nature">
        <title>Genome sequence of the human malaria parasite Plasmodium falciparum.</title>
        <authorList>
            <person name="Gardner M.J."/>
            <person name="Hall N."/>
            <person name="Fung E."/>
            <person name="White O."/>
            <person name="Berriman M."/>
            <person name="Hyman R.W."/>
            <person name="Carlton J.M."/>
            <person name="Pain A."/>
            <person name="Nelson K.E."/>
            <person name="Bowman S."/>
            <person name="Paulsen I.T."/>
            <person name="James K.D."/>
            <person name="Eisen J.A."/>
            <person name="Rutherford K.M."/>
            <person name="Salzberg S.L."/>
            <person name="Craig A."/>
            <person name="Kyes S."/>
            <person name="Chan M.-S."/>
            <person name="Nene V."/>
            <person name="Shallom S.J."/>
            <person name="Suh B."/>
            <person name="Peterson J."/>
            <person name="Angiuoli S."/>
            <person name="Pertea M."/>
            <person name="Allen J."/>
            <person name="Selengut J."/>
            <person name="Haft D."/>
            <person name="Mather M.W."/>
            <person name="Vaidya A.B."/>
            <person name="Martin D.M.A."/>
            <person name="Fairlamb A.H."/>
            <person name="Fraunholz M.J."/>
            <person name="Roos D.S."/>
            <person name="Ralph S.A."/>
            <person name="McFadden G.I."/>
            <person name="Cummings L.M."/>
            <person name="Subramanian G.M."/>
            <person name="Mungall C."/>
            <person name="Venter J.C."/>
            <person name="Carucci D.J."/>
            <person name="Hoffman S.L."/>
            <person name="Newbold C."/>
            <person name="Davis R.W."/>
            <person name="Fraser C.M."/>
            <person name="Barrell B.G."/>
        </authorList>
    </citation>
    <scope>NUCLEOTIDE SEQUENCE [LARGE SCALE GENOMIC DNA]</scope>
    <source>
        <strain>3D7</strain>
    </source>
</reference>
<reference key="2">
    <citation type="journal article" date="2002" name="Nature">
        <title>Sequence of Plasmodium falciparum chromosomes 1, 3-9 and 13.</title>
        <authorList>
            <person name="Hall N."/>
            <person name="Pain A."/>
            <person name="Berriman M."/>
            <person name="Churcher C.M."/>
            <person name="Harris B."/>
            <person name="Harris D."/>
            <person name="Mungall K.L."/>
            <person name="Bowman S."/>
            <person name="Atkin R."/>
            <person name="Baker S."/>
            <person name="Barron A."/>
            <person name="Brooks K."/>
            <person name="Buckee C.O."/>
            <person name="Burrows C."/>
            <person name="Cherevach I."/>
            <person name="Chillingworth C."/>
            <person name="Chillingworth T."/>
            <person name="Christodoulou Z."/>
            <person name="Clark L."/>
            <person name="Clark R."/>
            <person name="Corton C."/>
            <person name="Cronin A."/>
            <person name="Davies R.M."/>
            <person name="Davis P."/>
            <person name="Dear P."/>
            <person name="Dearden F."/>
            <person name="Doggett J."/>
            <person name="Feltwell T."/>
            <person name="Goble A."/>
            <person name="Goodhead I."/>
            <person name="Gwilliam R."/>
            <person name="Hamlin N."/>
            <person name="Hance Z."/>
            <person name="Harper D."/>
            <person name="Hauser H."/>
            <person name="Hornsby T."/>
            <person name="Holroyd S."/>
            <person name="Horrocks P."/>
            <person name="Humphray S."/>
            <person name="Jagels K."/>
            <person name="James K.D."/>
            <person name="Johnson D."/>
            <person name="Kerhornou A."/>
            <person name="Knights A."/>
            <person name="Konfortov B."/>
            <person name="Kyes S."/>
            <person name="Larke N."/>
            <person name="Lawson D."/>
            <person name="Lennard N."/>
            <person name="Line A."/>
            <person name="Maddison M."/>
            <person name="Mclean J."/>
            <person name="Mooney P."/>
            <person name="Moule S."/>
            <person name="Murphy L."/>
            <person name="Oliver K."/>
            <person name="Ormond D."/>
            <person name="Price C."/>
            <person name="Quail M.A."/>
            <person name="Rabbinowitsch E."/>
            <person name="Rajandream M.A."/>
            <person name="Rutter S."/>
            <person name="Rutherford K.M."/>
            <person name="Sanders M."/>
            <person name="Simmonds M."/>
            <person name="Seeger K."/>
            <person name="Sharp S."/>
            <person name="Smith R."/>
            <person name="Squares R."/>
            <person name="Squares S."/>
            <person name="Stevens K."/>
            <person name="Taylor K."/>
            <person name="Tivey A."/>
            <person name="Unwin L."/>
            <person name="Whitehead S."/>
            <person name="Woodward J.R."/>
            <person name="Sulston J.E."/>
            <person name="Craig A."/>
            <person name="Newbold C."/>
            <person name="Barrell B.G."/>
        </authorList>
    </citation>
    <scope>NUCLEOTIDE SEQUENCE [LARGE SCALE GENOMIC DNA]</scope>
    <source>
        <strain>3D7</strain>
    </source>
</reference>
<accession>Q8IAW3</accession>
<sequence>MPKYYCEYCDIYLTHSSPVGRRQHIHGRKHISAKIEYFQNLLREEGITPQNFLGFLNNRNINNPLGNPMMNYMNPNMYMKYNPMKSYHSYSMRSSHPYRLNIHNNKYSRAGYVPPSHHKYSVNPMHNNYHQAHNNYSYPNSINPSNQINYSNNYGSNNFNNSNEFNKNMNEKDNINNNDIHDNKVKTDENDPINNDNLNNTRNFSYEENHYSTDHKKPSFLNPENSKEHIESDIS</sequence>
<proteinExistence type="inferred from homology"/>
<feature type="chain" id="PRO_0000414275" description="U1 small nuclear ribonucleoprotein C">
    <location>
        <begin position="1"/>
        <end position="235"/>
    </location>
</feature>
<feature type="zinc finger region" description="Matrin-type" evidence="1">
    <location>
        <begin position="4"/>
        <end position="36"/>
    </location>
</feature>
<feature type="region of interest" description="Disordered" evidence="2">
    <location>
        <begin position="131"/>
        <end position="235"/>
    </location>
</feature>
<feature type="compositionally biased region" description="Low complexity" evidence="2">
    <location>
        <begin position="134"/>
        <end position="168"/>
    </location>
</feature>
<feature type="compositionally biased region" description="Basic and acidic residues" evidence="2">
    <location>
        <begin position="169"/>
        <end position="189"/>
    </location>
</feature>
<feature type="compositionally biased region" description="Low complexity" evidence="2">
    <location>
        <begin position="192"/>
        <end position="203"/>
    </location>
</feature>
<feature type="compositionally biased region" description="Basic and acidic residues" evidence="2">
    <location>
        <begin position="205"/>
        <end position="217"/>
    </location>
</feature>
<feature type="compositionally biased region" description="Basic and acidic residues" evidence="2">
    <location>
        <begin position="225"/>
        <end position="235"/>
    </location>
</feature>